<dbReference type="EC" id="2.1.1.-" evidence="1"/>
<dbReference type="EC" id="2.1.1.35" evidence="1"/>
<dbReference type="EMBL" id="L42023">
    <property type="protein sequence ID" value="AAC22505.1"/>
    <property type="molecule type" value="Genomic_DNA"/>
</dbReference>
<dbReference type="EMBL" id="M94205">
    <property type="protein sequence ID" value="AAA24958.1"/>
    <property type="molecule type" value="Genomic_DNA"/>
</dbReference>
<dbReference type="PIR" id="C64098">
    <property type="entry name" value="C64098"/>
</dbReference>
<dbReference type="RefSeq" id="NP_439008.1">
    <property type="nucleotide sequence ID" value="NC_000907.1"/>
</dbReference>
<dbReference type="SMR" id="P31812"/>
<dbReference type="STRING" id="71421.HI_0848"/>
<dbReference type="EnsemblBacteria" id="AAC22505">
    <property type="protein sequence ID" value="AAC22505"/>
    <property type="gene ID" value="HI_0848"/>
</dbReference>
<dbReference type="KEGG" id="hin:HI_0848"/>
<dbReference type="PATRIC" id="fig|71421.8.peg.889"/>
<dbReference type="eggNOG" id="COG2265">
    <property type="taxonomic scope" value="Bacteria"/>
</dbReference>
<dbReference type="HOGENOM" id="CLU_043022_0_0_6"/>
<dbReference type="OrthoDB" id="9804590at2"/>
<dbReference type="PhylomeDB" id="P31812"/>
<dbReference type="BioCyc" id="HINF71421:G1GJ1-888-MONOMER"/>
<dbReference type="Proteomes" id="UP000000579">
    <property type="component" value="Chromosome"/>
</dbReference>
<dbReference type="GO" id="GO:0005829">
    <property type="term" value="C:cytosol"/>
    <property type="evidence" value="ECO:0000318"/>
    <property type="project" value="GO_Central"/>
</dbReference>
<dbReference type="GO" id="GO:0019843">
    <property type="term" value="F:rRNA binding"/>
    <property type="evidence" value="ECO:0000318"/>
    <property type="project" value="GO_Central"/>
</dbReference>
<dbReference type="GO" id="GO:0030697">
    <property type="term" value="F:tRNA (uracil(54)-C5)-methyltransferase activity, S-adenosyl methionine-dependent"/>
    <property type="evidence" value="ECO:0000318"/>
    <property type="project" value="GO_Central"/>
</dbReference>
<dbReference type="GO" id="GO:0000049">
    <property type="term" value="F:tRNA binding"/>
    <property type="evidence" value="ECO:0000318"/>
    <property type="project" value="GO_Central"/>
</dbReference>
<dbReference type="GO" id="GO:0030488">
    <property type="term" value="P:tRNA methylation"/>
    <property type="evidence" value="ECO:0007669"/>
    <property type="project" value="UniProtKB-UniRule"/>
</dbReference>
<dbReference type="CDD" id="cd02440">
    <property type="entry name" value="AdoMet_MTases"/>
    <property type="match status" value="1"/>
</dbReference>
<dbReference type="FunFam" id="2.40.50.1070:FF:000001">
    <property type="entry name" value="tRNA/tmRNA (uracil-C(5))-methyltransferase"/>
    <property type="match status" value="1"/>
</dbReference>
<dbReference type="FunFam" id="3.40.50.150:FF:000012">
    <property type="entry name" value="tRNA/tmRNA (uracil-C(5))-methyltransferase"/>
    <property type="match status" value="1"/>
</dbReference>
<dbReference type="Gene3D" id="2.40.50.1070">
    <property type="match status" value="1"/>
</dbReference>
<dbReference type="Gene3D" id="3.40.50.150">
    <property type="entry name" value="Vaccinia Virus protein VP39"/>
    <property type="match status" value="1"/>
</dbReference>
<dbReference type="HAMAP" id="MF_01011">
    <property type="entry name" value="RNA_methyltr_TrmA"/>
    <property type="match status" value="1"/>
</dbReference>
<dbReference type="InterPro" id="IPR030390">
    <property type="entry name" value="MeTrfase_TrmA_AS"/>
</dbReference>
<dbReference type="InterPro" id="IPR030391">
    <property type="entry name" value="MeTrfase_TrmA_CS"/>
</dbReference>
<dbReference type="InterPro" id="IPR029063">
    <property type="entry name" value="SAM-dependent_MTases_sf"/>
</dbReference>
<dbReference type="InterPro" id="IPR011869">
    <property type="entry name" value="TrmA_MeTrfase"/>
</dbReference>
<dbReference type="InterPro" id="IPR010280">
    <property type="entry name" value="U5_MeTrfase_fam"/>
</dbReference>
<dbReference type="NCBIfam" id="TIGR02143">
    <property type="entry name" value="trmA_only"/>
    <property type="match status" value="1"/>
</dbReference>
<dbReference type="PANTHER" id="PTHR47790">
    <property type="entry name" value="TRNA/TMRNA (URACIL-C(5))-METHYLTRANSFERASE"/>
    <property type="match status" value="1"/>
</dbReference>
<dbReference type="PANTHER" id="PTHR47790:SF2">
    <property type="entry name" value="TRNA_TMRNA (URACIL-C(5))-METHYLTRANSFERASE"/>
    <property type="match status" value="1"/>
</dbReference>
<dbReference type="Pfam" id="PF05958">
    <property type="entry name" value="tRNA_U5-meth_tr"/>
    <property type="match status" value="1"/>
</dbReference>
<dbReference type="SUPFAM" id="SSF53335">
    <property type="entry name" value="S-adenosyl-L-methionine-dependent methyltransferases"/>
    <property type="match status" value="1"/>
</dbReference>
<dbReference type="PROSITE" id="PS51687">
    <property type="entry name" value="SAM_MT_RNA_M5U"/>
    <property type="match status" value="1"/>
</dbReference>
<dbReference type="PROSITE" id="PS01230">
    <property type="entry name" value="TRMA_1"/>
    <property type="match status" value="1"/>
</dbReference>
<dbReference type="PROSITE" id="PS01231">
    <property type="entry name" value="TRMA_2"/>
    <property type="match status" value="1"/>
</dbReference>
<keyword id="KW-0489">Methyltransferase</keyword>
<keyword id="KW-1185">Reference proteome</keyword>
<keyword id="KW-0949">S-adenosyl-L-methionine</keyword>
<keyword id="KW-0808">Transferase</keyword>
<keyword id="KW-0819">tRNA processing</keyword>
<reference key="1">
    <citation type="journal article" date="1995" name="Science">
        <title>Whole-genome random sequencing and assembly of Haemophilus influenzae Rd.</title>
        <authorList>
            <person name="Fleischmann R.D."/>
            <person name="Adams M.D."/>
            <person name="White O."/>
            <person name="Clayton R.A."/>
            <person name="Kirkness E.F."/>
            <person name="Kerlavage A.R."/>
            <person name="Bult C.J."/>
            <person name="Tomb J.-F."/>
            <person name="Dougherty B.A."/>
            <person name="Merrick J.M."/>
            <person name="McKenney K."/>
            <person name="Sutton G.G."/>
            <person name="FitzHugh W."/>
            <person name="Fields C.A."/>
            <person name="Gocayne J.D."/>
            <person name="Scott J.D."/>
            <person name="Shirley R."/>
            <person name="Liu L.-I."/>
            <person name="Glodek A."/>
            <person name="Kelley J.M."/>
            <person name="Weidman J.F."/>
            <person name="Phillips C.A."/>
            <person name="Spriggs T."/>
            <person name="Hedblom E."/>
            <person name="Cotton M.D."/>
            <person name="Utterback T.R."/>
            <person name="Hanna M.C."/>
            <person name="Nguyen D.T."/>
            <person name="Saudek D.M."/>
            <person name="Brandon R.C."/>
            <person name="Fine L.D."/>
            <person name="Fritchman J.L."/>
            <person name="Fuhrmann J.L."/>
            <person name="Geoghagen N.S.M."/>
            <person name="Gnehm C.L."/>
            <person name="McDonald L.A."/>
            <person name="Small K.V."/>
            <person name="Fraser C.M."/>
            <person name="Smith H.O."/>
            <person name="Venter J.C."/>
        </authorList>
    </citation>
    <scope>NUCLEOTIDE SEQUENCE [LARGE SCALE GENOMIC DNA]</scope>
    <source>
        <strain>ATCC 51907 / DSM 11121 / KW20 / Rd</strain>
    </source>
</reference>
<reference key="2">
    <citation type="journal article" date="1992" name="Proc. Natl. Acad. Sci. U.S.A.">
        <title>A periplasmic protein disulfide oxidoreductase is required for transformation of Haemophilus influenzae Rd.</title>
        <authorList>
            <person name="Tomb J.-F."/>
        </authorList>
    </citation>
    <scope>NUCLEOTIDE SEQUENCE [GENOMIC DNA] OF 1-63</scope>
    <source>
        <strain>ATCC 51907 / DSM 11121 / KW20 / Rd</strain>
    </source>
</reference>
<gene>
    <name evidence="1" type="primary">trmA</name>
    <name type="ordered locus">HI_0848</name>
</gene>
<feature type="chain" id="PRO_0000161864" description="tRNA/tmRNA (uracil-C(5))-methyltransferase">
    <location>
        <begin position="1"/>
        <end position="363"/>
    </location>
</feature>
<feature type="active site" description="Nucleophile" evidence="1">
    <location>
        <position position="321"/>
    </location>
</feature>
<feature type="active site" description="Proton acceptor" evidence="1">
    <location>
        <position position="355"/>
    </location>
</feature>
<feature type="binding site" evidence="1">
    <location>
        <position position="187"/>
    </location>
    <ligand>
        <name>S-adenosyl-L-methionine</name>
        <dbReference type="ChEBI" id="CHEBI:59789"/>
    </ligand>
</feature>
<feature type="binding site" evidence="1">
    <location>
        <position position="215"/>
    </location>
    <ligand>
        <name>S-adenosyl-L-methionine</name>
        <dbReference type="ChEBI" id="CHEBI:59789"/>
    </ligand>
</feature>
<feature type="binding site" evidence="1">
    <location>
        <position position="220"/>
    </location>
    <ligand>
        <name>S-adenosyl-L-methionine</name>
        <dbReference type="ChEBI" id="CHEBI:59789"/>
    </ligand>
</feature>
<feature type="binding site" evidence="1">
    <location>
        <position position="236"/>
    </location>
    <ligand>
        <name>S-adenosyl-L-methionine</name>
        <dbReference type="ChEBI" id="CHEBI:59789"/>
    </ligand>
</feature>
<feature type="binding site" evidence="1">
    <location>
        <position position="296"/>
    </location>
    <ligand>
        <name>S-adenosyl-L-methionine</name>
        <dbReference type="ChEBI" id="CHEBI:59789"/>
    </ligand>
</feature>
<feature type="sequence conflict" description="In Ref. 2; AAA24958." evidence="2" ref="2">
    <original>R</original>
    <variation>A</variation>
    <location>
        <position position="42"/>
    </location>
</feature>
<accession>P31812</accession>
<proteinExistence type="inferred from homology"/>
<protein>
    <recommendedName>
        <fullName evidence="1">tRNA/tmRNA (uracil-C(5))-methyltransferase</fullName>
        <ecNumber evidence="1">2.1.1.-</ecNumber>
        <ecNumber evidence="1">2.1.1.35</ecNumber>
    </recommendedName>
    <alternativeName>
        <fullName evidence="1">tRNA (uracil(54)-C(5))-methyltransferase</fullName>
    </alternativeName>
    <alternativeName>
        <fullName evidence="1">tRNA(m5U54)-methyltransferase</fullName>
        <shortName evidence="1">RUMT</shortName>
    </alternativeName>
    <alternativeName>
        <fullName evidence="1">tmRNA (uracil(341)-C(5))-methyltransferase</fullName>
    </alternativeName>
</protein>
<evidence type="ECO:0000255" key="1">
    <source>
        <dbReference type="HAMAP-Rule" id="MF_01011"/>
    </source>
</evidence>
<evidence type="ECO:0000305" key="2"/>
<name>TRMA_HAEIN</name>
<sequence>MQLPISQYNELLQKKLEKLTALLHPFNAPDIQVFDSPTSHYRMRAEFRIWHEQDDFYHIMFDQATLQRYRVDEFPIASMLINRMMQTLLPLLKQQEVLHKKLFQIDYLSTLSNKIIVSLLYHKTLTEEWESAAKNLKDLLEKQDFDVQIIGRASKQKICFEQDYVDEVLPVNGRNYVYRQVENSFTQPNATVNCKMLEWAIDCTQNSEGDLLELYCGNGNFSIALAQNFRKVLATEIAKPSVAAAQFNIAENKVDNLQIIRMSAEEFTQAMNGVRAFNRLKGIDLKSYECNTIFVDPPRAGLDPDTVKLVQNYDRILYISCNPHTLCDNLVELSKTHRIEKAALFDQFPYTDHMESGLWLIRK</sequence>
<comment type="function">
    <text evidence="1">Dual-specificity methyltransferase that catalyzes the formation of 5-methyluridine at position 54 (m5U54) in all tRNAs, and that of position 341 (m5U341) in tmRNA (transfer-mRNA).</text>
</comment>
<comment type="catalytic activity">
    <reaction evidence="1">
        <text>uridine(54) in tRNA + S-adenosyl-L-methionine = 5-methyluridine(54) in tRNA + S-adenosyl-L-homocysteine + H(+)</text>
        <dbReference type="Rhea" id="RHEA:42712"/>
        <dbReference type="Rhea" id="RHEA-COMP:10167"/>
        <dbReference type="Rhea" id="RHEA-COMP:10193"/>
        <dbReference type="ChEBI" id="CHEBI:15378"/>
        <dbReference type="ChEBI" id="CHEBI:57856"/>
        <dbReference type="ChEBI" id="CHEBI:59789"/>
        <dbReference type="ChEBI" id="CHEBI:65315"/>
        <dbReference type="ChEBI" id="CHEBI:74447"/>
        <dbReference type="EC" id="2.1.1.35"/>
    </reaction>
</comment>
<comment type="catalytic activity">
    <reaction evidence="1">
        <text>uridine(341) in tmRNA + S-adenosyl-L-methionine = 5-methyluridine(341) in tmRNA + S-adenosyl-L-homocysteine + H(+)</text>
        <dbReference type="Rhea" id="RHEA:43612"/>
        <dbReference type="Rhea" id="RHEA-COMP:10630"/>
        <dbReference type="Rhea" id="RHEA-COMP:10631"/>
        <dbReference type="ChEBI" id="CHEBI:15378"/>
        <dbReference type="ChEBI" id="CHEBI:57856"/>
        <dbReference type="ChEBI" id="CHEBI:59789"/>
        <dbReference type="ChEBI" id="CHEBI:65315"/>
        <dbReference type="ChEBI" id="CHEBI:74447"/>
    </reaction>
</comment>
<comment type="similarity">
    <text evidence="1">Belongs to the class I-like SAM-binding methyltransferase superfamily. RNA M5U methyltransferase family. TrmA subfamily.</text>
</comment>
<organism>
    <name type="scientific">Haemophilus influenzae (strain ATCC 51907 / DSM 11121 / KW20 / Rd)</name>
    <dbReference type="NCBI Taxonomy" id="71421"/>
    <lineage>
        <taxon>Bacteria</taxon>
        <taxon>Pseudomonadati</taxon>
        <taxon>Pseudomonadota</taxon>
        <taxon>Gammaproteobacteria</taxon>
        <taxon>Pasteurellales</taxon>
        <taxon>Pasteurellaceae</taxon>
        <taxon>Haemophilus</taxon>
    </lineage>
</organism>